<protein>
    <recommendedName>
        <fullName>Agglutinin alpha chain</fullName>
    </recommendedName>
    <alternativeName>
        <fullName>Jacalin alpha chain</fullName>
    </alternativeName>
</protein>
<keyword id="KW-0903">Direct protein sequencing</keyword>
<keyword id="KW-0325">Glycoprotein</keyword>
<keyword id="KW-0388">IgA-binding protein</keyword>
<keyword id="KW-0430">Lectin</keyword>
<name>LECA_ARTTO</name>
<comment type="function">
    <text evidence="1">D-galactose-specific lectin, binds the T-antigen structure Gal-beta1,3-GalNAc (Thomsen-Friedenreich-antigen-specific lectin). Potent and selective stimulant of distinct T- and B-cell functions. Shows a unique ability to specifically recognize IgA-1 from human serum (By similarity).</text>
</comment>
<comment type="subunit">
    <text evidence="1">Tetramer of four alpha chains associated with two or four beta chains.</text>
</comment>
<comment type="PTM">
    <text evidence="1">N-glycosylated.</text>
</comment>
<comment type="similarity">
    <text evidence="2">Belongs to the jacalin lectin family.</text>
</comment>
<proteinExistence type="evidence at protein level"/>
<accession>P84762</accession>
<accession>Q9S788</accession>
<dbReference type="PIR" id="S29639">
    <property type="entry name" value="S29639"/>
</dbReference>
<dbReference type="SMR" id="P84762"/>
<dbReference type="GO" id="GO:0030246">
    <property type="term" value="F:carbohydrate binding"/>
    <property type="evidence" value="ECO:0000250"/>
    <property type="project" value="UniProtKB"/>
</dbReference>
<dbReference type="GO" id="GO:0019862">
    <property type="term" value="F:IgA binding"/>
    <property type="evidence" value="ECO:0000250"/>
    <property type="project" value="UniProtKB"/>
</dbReference>
<dbReference type="InterPro" id="IPR001229">
    <property type="entry name" value="Jacalin-like_lectin_dom"/>
</dbReference>
<dbReference type="PROSITE" id="PS51752">
    <property type="entry name" value="JACALIN_LECTIN"/>
    <property type="match status" value="1"/>
</dbReference>
<evidence type="ECO:0000250" key="1">
    <source>
        <dbReference type="UniProtKB" id="P18670"/>
    </source>
</evidence>
<evidence type="ECO:0000255" key="2">
    <source>
        <dbReference type="PROSITE-ProRule" id="PRU01088"/>
    </source>
</evidence>
<evidence type="ECO:0000303" key="3">
    <source>
    </source>
</evidence>
<evidence type="ECO:0000305" key="4"/>
<sequence>GKAFDDGAFTGIREINLSINKETAIGD</sequence>
<reference evidence="4" key="1">
    <citation type="journal article" date="1993" name="Biochim. Biophys. Acta">
        <title>The alpha- and beta-subunits of the jacalins are cleavage products from a 17-kDa precursor.</title>
        <authorList>
            <person name="Ngoc L.D."/>
            <person name="Brillard M."/>
            <person name="Hoebeke J."/>
        </authorList>
    </citation>
    <scope>PROTEIN SEQUENCE</scope>
</reference>
<organism>
    <name type="scientific">Artocarpus tonkinensis</name>
    <dbReference type="NCBI Taxonomy" id="3492"/>
    <lineage>
        <taxon>Eukaryota</taxon>
        <taxon>Viridiplantae</taxon>
        <taxon>Streptophyta</taxon>
        <taxon>Embryophyta</taxon>
        <taxon>Tracheophyta</taxon>
        <taxon>Spermatophyta</taxon>
        <taxon>Magnoliopsida</taxon>
        <taxon>eudicotyledons</taxon>
        <taxon>Gunneridae</taxon>
        <taxon>Pentapetalae</taxon>
        <taxon>rosids</taxon>
        <taxon>fabids</taxon>
        <taxon>Rosales</taxon>
        <taxon>Moraceae</taxon>
        <taxon>Artocarpeae</taxon>
        <taxon>Artocarpus</taxon>
    </lineage>
</organism>
<feature type="chain" id="PRO_0000072800" description="Agglutinin alpha chain">
    <location>
        <begin position="1"/>
        <end position="27" status="greater than"/>
    </location>
</feature>
<feature type="domain" description="Jacalin-type lectin" evidence="2">
    <location>
        <begin position="1"/>
        <end position="27"/>
    </location>
</feature>
<feature type="non-terminal residue" evidence="3">
    <location>
        <position position="27"/>
    </location>
</feature>